<accession>Q8K4C8</accession>
<keyword id="KW-1003">Cell membrane</keyword>
<keyword id="KW-0217">Developmental protein</keyword>
<keyword id="KW-1015">Disulfide bond</keyword>
<keyword id="KW-0297">G-protein coupled receptor</keyword>
<keyword id="KW-0472">Membrane</keyword>
<keyword id="KW-0675">Receptor</keyword>
<keyword id="KW-1185">Reference proteome</keyword>
<keyword id="KW-0732">Signal</keyword>
<keyword id="KW-0807">Transducer</keyword>
<keyword id="KW-0812">Transmembrane</keyword>
<keyword id="KW-1133">Transmembrane helix</keyword>
<keyword id="KW-0832">Ubl conjugation</keyword>
<keyword id="KW-0879">Wnt signaling pathway</keyword>
<evidence type="ECO:0000250" key="1"/>
<evidence type="ECO:0000250" key="2">
    <source>
        <dbReference type="UniProtKB" id="O00144"/>
    </source>
</evidence>
<evidence type="ECO:0000250" key="3">
    <source>
        <dbReference type="UniProtKB" id="Q9R216"/>
    </source>
</evidence>
<evidence type="ECO:0000255" key="4"/>
<evidence type="ECO:0000255" key="5">
    <source>
        <dbReference type="PROSITE-ProRule" id="PRU00090"/>
    </source>
</evidence>
<evidence type="ECO:0000269" key="6">
    <source>
    </source>
</evidence>
<evidence type="ECO:0000303" key="7">
    <source>
    </source>
</evidence>
<evidence type="ECO:0000303" key="8">
    <source>
    </source>
</evidence>
<evidence type="ECO:0000305" key="9"/>
<evidence type="ECO:0000312" key="10">
    <source>
        <dbReference type="RGD" id="628817"/>
    </source>
</evidence>
<dbReference type="EMBL" id="AF455054">
    <property type="protein sequence ID" value="AAN03014.1"/>
    <property type="molecule type" value="mRNA"/>
</dbReference>
<dbReference type="EMBL" id="DQ211688">
    <property type="protein sequence ID" value="ABB20593.1"/>
    <property type="molecule type" value="mRNA"/>
</dbReference>
<dbReference type="EMBL" id="DQ211689">
    <property type="protein sequence ID" value="ABB20594.1"/>
    <property type="molecule type" value="mRNA"/>
</dbReference>
<dbReference type="EMBL" id="AABR07035836">
    <property type="status" value="NOT_ANNOTATED_CDS"/>
    <property type="molecule type" value="Genomic_DNA"/>
</dbReference>
<dbReference type="EMBL" id="CH473973">
    <property type="protein sequence ID" value="EDM13380.1"/>
    <property type="molecule type" value="Genomic_DNA"/>
</dbReference>
<dbReference type="RefSeq" id="NP_695217.1">
    <property type="nucleotide sequence ID" value="NM_153305.1"/>
</dbReference>
<dbReference type="SMR" id="Q8K4C8"/>
<dbReference type="FunCoup" id="Q8K4C8">
    <property type="interactions" value="537"/>
</dbReference>
<dbReference type="STRING" id="10116.ENSRNOP00000001973"/>
<dbReference type="GlyGen" id="Q8K4C8">
    <property type="glycosylation" value="1 site"/>
</dbReference>
<dbReference type="PhosphoSitePlus" id="Q8K4C8"/>
<dbReference type="PaxDb" id="10116-ENSRNOP00000001973"/>
<dbReference type="Ensembl" id="ENSRNOT00000001973.4">
    <property type="protein sequence ID" value="ENSRNOP00000001973.2"/>
    <property type="gene ID" value="ENSRNOG00000001452.4"/>
</dbReference>
<dbReference type="GeneID" id="266608"/>
<dbReference type="KEGG" id="rno:266608"/>
<dbReference type="UCSC" id="RGD:628817">
    <property type="organism name" value="rat"/>
</dbReference>
<dbReference type="AGR" id="RGD:628817"/>
<dbReference type="CTD" id="8326"/>
<dbReference type="RGD" id="628817">
    <property type="gene designation" value="Fzd9"/>
</dbReference>
<dbReference type="eggNOG" id="KOG3577">
    <property type="taxonomic scope" value="Eukaryota"/>
</dbReference>
<dbReference type="GeneTree" id="ENSGT00940000161226"/>
<dbReference type="HOGENOM" id="CLU_007873_2_1_1"/>
<dbReference type="InParanoid" id="Q8K4C8"/>
<dbReference type="OMA" id="VAYGCHG"/>
<dbReference type="OrthoDB" id="5959102at2759"/>
<dbReference type="PhylomeDB" id="Q8K4C8"/>
<dbReference type="TreeFam" id="TF317907"/>
<dbReference type="PRO" id="PR:Q8K4C8"/>
<dbReference type="Proteomes" id="UP000002494">
    <property type="component" value="Chromosome 12"/>
</dbReference>
<dbReference type="Proteomes" id="UP000234681">
    <property type="component" value="Chromosome 12"/>
</dbReference>
<dbReference type="Bgee" id="ENSRNOG00000001452">
    <property type="expression patterns" value="Expressed in skeletal muscle tissue and 14 other cell types or tissues"/>
</dbReference>
<dbReference type="GO" id="GO:0009986">
    <property type="term" value="C:cell surface"/>
    <property type="evidence" value="ECO:0000266"/>
    <property type="project" value="RGD"/>
</dbReference>
<dbReference type="GO" id="GO:0005737">
    <property type="term" value="C:cytoplasm"/>
    <property type="evidence" value="ECO:0000266"/>
    <property type="project" value="RGD"/>
</dbReference>
<dbReference type="GO" id="GO:0005615">
    <property type="term" value="C:extracellular space"/>
    <property type="evidence" value="ECO:0000318"/>
    <property type="project" value="GO_Central"/>
</dbReference>
<dbReference type="GO" id="GO:0031527">
    <property type="term" value="C:filopodium membrane"/>
    <property type="evidence" value="ECO:0000266"/>
    <property type="project" value="RGD"/>
</dbReference>
<dbReference type="GO" id="GO:0098978">
    <property type="term" value="C:glutamatergic synapse"/>
    <property type="evidence" value="ECO:0000314"/>
    <property type="project" value="SynGO"/>
</dbReference>
<dbReference type="GO" id="GO:0048471">
    <property type="term" value="C:perinuclear region of cytoplasm"/>
    <property type="evidence" value="ECO:0000266"/>
    <property type="project" value="RGD"/>
</dbReference>
<dbReference type="GO" id="GO:0005886">
    <property type="term" value="C:plasma membrane"/>
    <property type="evidence" value="ECO:0000266"/>
    <property type="project" value="RGD"/>
</dbReference>
<dbReference type="GO" id="GO:0098794">
    <property type="term" value="C:postsynapse"/>
    <property type="evidence" value="ECO:0000314"/>
    <property type="project" value="SynGO"/>
</dbReference>
<dbReference type="GO" id="GO:0004930">
    <property type="term" value="F:G protein-coupled receptor activity"/>
    <property type="evidence" value="ECO:0007669"/>
    <property type="project" value="UniProtKB-KW"/>
</dbReference>
<dbReference type="GO" id="GO:0046982">
    <property type="term" value="F:protein heterodimerization activity"/>
    <property type="evidence" value="ECO:0000266"/>
    <property type="project" value="RGD"/>
</dbReference>
<dbReference type="GO" id="GO:0042803">
    <property type="term" value="F:protein homodimerization activity"/>
    <property type="evidence" value="ECO:0000266"/>
    <property type="project" value="RGD"/>
</dbReference>
<dbReference type="GO" id="GO:0042813">
    <property type="term" value="F:Wnt receptor activity"/>
    <property type="evidence" value="ECO:0000314"/>
    <property type="project" value="RGD"/>
</dbReference>
<dbReference type="GO" id="GO:0017147">
    <property type="term" value="F:Wnt-protein binding"/>
    <property type="evidence" value="ECO:0000266"/>
    <property type="project" value="RGD"/>
</dbReference>
<dbReference type="GO" id="GO:0030183">
    <property type="term" value="P:B cell differentiation"/>
    <property type="evidence" value="ECO:0000266"/>
    <property type="project" value="RGD"/>
</dbReference>
<dbReference type="GO" id="GO:1990523">
    <property type="term" value="P:bone regeneration"/>
    <property type="evidence" value="ECO:0000250"/>
    <property type="project" value="UniProtKB"/>
</dbReference>
<dbReference type="GO" id="GO:0060070">
    <property type="term" value="P:canonical Wnt signaling pathway"/>
    <property type="evidence" value="ECO:0000318"/>
    <property type="project" value="GO_Central"/>
</dbReference>
<dbReference type="GO" id="GO:0007611">
    <property type="term" value="P:learning or memory"/>
    <property type="evidence" value="ECO:0000266"/>
    <property type="project" value="RGD"/>
</dbReference>
<dbReference type="GO" id="GO:0043524">
    <property type="term" value="P:negative regulation of neuron apoptotic process"/>
    <property type="evidence" value="ECO:0000250"/>
    <property type="project" value="UniProtKB"/>
</dbReference>
<dbReference type="GO" id="GO:1904394">
    <property type="term" value="P:negative regulation of skeletal muscle acetylcholine-gated channel clustering"/>
    <property type="evidence" value="ECO:0000250"/>
    <property type="project" value="UniProtKB"/>
</dbReference>
<dbReference type="GO" id="GO:0007405">
    <property type="term" value="P:neuroblast proliferation"/>
    <property type="evidence" value="ECO:0000266"/>
    <property type="project" value="RGD"/>
</dbReference>
<dbReference type="GO" id="GO:0035567">
    <property type="term" value="P:non-canonical Wnt signaling pathway"/>
    <property type="evidence" value="ECO:0000318"/>
    <property type="project" value="GO_Central"/>
</dbReference>
<dbReference type="GO" id="GO:0001503">
    <property type="term" value="P:ossification"/>
    <property type="evidence" value="ECO:0000250"/>
    <property type="project" value="UniProtKB"/>
</dbReference>
<dbReference type="GO" id="GO:0030501">
    <property type="term" value="P:positive regulation of bone mineralization"/>
    <property type="evidence" value="ECO:0000250"/>
    <property type="project" value="UniProtKB"/>
</dbReference>
<dbReference type="GO" id="GO:0090263">
    <property type="term" value="P:positive regulation of canonical Wnt signaling pathway"/>
    <property type="evidence" value="ECO:0000250"/>
    <property type="project" value="UniProtKB"/>
</dbReference>
<dbReference type="GO" id="GO:2000179">
    <property type="term" value="P:positive regulation of neural precursor cell proliferation"/>
    <property type="evidence" value="ECO:0000250"/>
    <property type="project" value="UniProtKB"/>
</dbReference>
<dbReference type="GO" id="GO:0099173">
    <property type="term" value="P:postsynapse organization"/>
    <property type="evidence" value="ECO:0000314"/>
    <property type="project" value="SynGO"/>
</dbReference>
<dbReference type="GO" id="GO:0051726">
    <property type="term" value="P:regulation of cell cycle"/>
    <property type="evidence" value="ECO:0000250"/>
    <property type="project" value="UniProtKB"/>
</dbReference>
<dbReference type="GO" id="GO:0099566">
    <property type="term" value="P:regulation of postsynaptic cytosolic calcium ion concentration"/>
    <property type="evidence" value="ECO:0000314"/>
    <property type="project" value="SynGO"/>
</dbReference>
<dbReference type="GO" id="GO:1904393">
    <property type="term" value="P:regulation of skeletal muscle acetylcholine-gated channel clustering"/>
    <property type="evidence" value="ECO:0000250"/>
    <property type="project" value="UniProtKB"/>
</dbReference>
<dbReference type="GO" id="GO:0016055">
    <property type="term" value="P:Wnt signaling pathway"/>
    <property type="evidence" value="ECO:0000314"/>
    <property type="project" value="RGD"/>
</dbReference>
<dbReference type="CDD" id="cd15036">
    <property type="entry name" value="7tmF_FZD9"/>
    <property type="match status" value="1"/>
</dbReference>
<dbReference type="CDD" id="cd07463">
    <property type="entry name" value="CRD_FZ9"/>
    <property type="match status" value="1"/>
</dbReference>
<dbReference type="FunFam" id="1.10.2000.10:FF:000007">
    <property type="entry name" value="Frizzled class receptor 10"/>
    <property type="match status" value="1"/>
</dbReference>
<dbReference type="FunFam" id="1.20.1070.10:FF:000020">
    <property type="entry name" value="Frizzled class receptor 10"/>
    <property type="match status" value="1"/>
</dbReference>
<dbReference type="Gene3D" id="1.10.2000.10">
    <property type="entry name" value="Frizzled cysteine-rich domain"/>
    <property type="match status" value="1"/>
</dbReference>
<dbReference type="Gene3D" id="1.20.1070.10">
    <property type="entry name" value="Rhodopsin 7-helix transmembrane proteins"/>
    <property type="match status" value="1"/>
</dbReference>
<dbReference type="InterPro" id="IPR015526">
    <property type="entry name" value="Frizzled/SFRP"/>
</dbReference>
<dbReference type="InterPro" id="IPR000539">
    <property type="entry name" value="Frizzled/Smoothened_7TM"/>
</dbReference>
<dbReference type="InterPro" id="IPR020067">
    <property type="entry name" value="Frizzled_dom"/>
</dbReference>
<dbReference type="InterPro" id="IPR036790">
    <property type="entry name" value="Frizzled_dom_sf"/>
</dbReference>
<dbReference type="InterPro" id="IPR041777">
    <property type="entry name" value="FZ9_CRD"/>
</dbReference>
<dbReference type="InterPro" id="IPR017981">
    <property type="entry name" value="GPCR_2-like_7TM"/>
</dbReference>
<dbReference type="PANTHER" id="PTHR11309">
    <property type="entry name" value="FRIZZLED"/>
    <property type="match status" value="1"/>
</dbReference>
<dbReference type="PANTHER" id="PTHR11309:SF79">
    <property type="entry name" value="FRIZZLED-9"/>
    <property type="match status" value="1"/>
</dbReference>
<dbReference type="Pfam" id="PF01534">
    <property type="entry name" value="Frizzled"/>
    <property type="match status" value="1"/>
</dbReference>
<dbReference type="Pfam" id="PF01392">
    <property type="entry name" value="Fz"/>
    <property type="match status" value="1"/>
</dbReference>
<dbReference type="PRINTS" id="PR00489">
    <property type="entry name" value="FRIZZLED"/>
</dbReference>
<dbReference type="SMART" id="SM00063">
    <property type="entry name" value="FRI"/>
    <property type="match status" value="1"/>
</dbReference>
<dbReference type="SMART" id="SM01330">
    <property type="entry name" value="Frizzled"/>
    <property type="match status" value="1"/>
</dbReference>
<dbReference type="SUPFAM" id="SSF63501">
    <property type="entry name" value="Frizzled cysteine-rich domain"/>
    <property type="match status" value="1"/>
</dbReference>
<dbReference type="PROSITE" id="PS50038">
    <property type="entry name" value="FZ"/>
    <property type="match status" value="1"/>
</dbReference>
<dbReference type="PROSITE" id="PS50261">
    <property type="entry name" value="G_PROTEIN_RECEP_F2_4"/>
    <property type="match status" value="1"/>
</dbReference>
<comment type="function">
    <text evidence="2 3 6">Receptor for WNT2 that is coupled to the beta-catenin canonical signaling pathway, which leads to the activation of disheveled proteins, inhibition of GSK-3 kinase, nuclear accumulation of beta-catenin and activation of Wnt target genes (PubMed:12138115). Plays a role in neuromuscular junction (NMJ) assembly by negatively regulating the clustering of acetylcholine receptors (AChR) through the beta-catenin canonical signaling pathway (By similarity). May play a role in neural progenitor cells (NPCs) viability through the beta-catenin canonical signaling pathway by negatively regulating cell cycle arrest leading to inhibition of neuron apoptotic process (By similarity). During hippocampal development, regulates neuroblast proliferation and apoptotic cell death. Controls bone formation through non canonical Wnt signaling mediated via ISG15. Positively regulates bone regeneration through non canonical Wnt signaling (By similarity).</text>
</comment>
<comment type="subcellular location">
    <subcellularLocation>
        <location evidence="6">Cell membrane</location>
        <topology evidence="4">Multi-pass membrane protein</topology>
    </subcellularLocation>
    <text evidence="6">Relocalizes DVL1 to the cell membrane leading to phosphorylation of DVL1 and AXIN1 relocalization to the cell membrane.</text>
</comment>
<comment type="domain">
    <text evidence="1">Lys-Thr-X-X-X-Trp motif interacts with the PDZ domain of Dvl (Disheveled) family members and is involved in the activation of the Wnt/beta-catenin signaling pathway.</text>
</comment>
<comment type="domain">
    <text evidence="1">The FZ domain is involved in binding with Wnt ligands.</text>
</comment>
<comment type="PTM">
    <text evidence="1">Ubiquitinated by ZNRF3, leading to its degradation by the proteasome.</text>
</comment>
<comment type="similarity">
    <text evidence="9">Belongs to the G-protein coupled receptor Fz/Smo family.</text>
</comment>
<gene>
    <name evidence="10" type="primary">Fzd9</name>
</gene>
<sequence length="592" mass="64965">MAVPPLLRGALLLWQLLATGGAALEIGRFDPERGRGPAPCQAMEIPMCRGIGYNLTRMPNLLGHTSQGEAAAQLAEFSPLVQYGCHSHLRFFLCSLYAPMCTDQVSTPIPACRPMCEQARLRCAPIMEQFNFGWPDSLDCARLPTRNDPHALCMEAPENATAGPTEPHKGLGMLPVAPRPARPPGDSAPGPGSGGTCDNPEKFQYVEKSRSCAPRCGPGVEVFWSRRDKDFALVWMAVWSALCFFSTAFTVFTFLLEPHRFQYPERPIIFLSMCYNVYSLAFLIRAVAGAQSVACDQEAGALYVIQEGLENTGCTLVFLLLYYFGMASSLWWVVLTLTWFLAAGKKWGHEAIEAHGSYFHMAAWGLPALKTIVVLTLRKVAGDELTGLCYVASMDPAALTGFVLVPLSCYLVLGTSFLLTGFVALFHIRKIMKTGGTNTEKLEKLMVKIGVFSILYTVPATCVIVCYVYERLNMDFWRLRATEQPCTAAAVPGGRRDCSLPGGSVPTVAVFMLKIFMSLVVGITSGVWVWSSKTFQTWQSLCYRKMAAGRARAKACRTPGGYGRGTHCHYKAPTVVLHMTKTDPSLENPTHL</sequence>
<feature type="signal peptide" evidence="4">
    <location>
        <begin position="1"/>
        <end position="23"/>
    </location>
</feature>
<feature type="chain" id="PRO_5008178514" description="Frizzled-9">
    <location>
        <begin position="24"/>
        <end position="592"/>
    </location>
</feature>
<feature type="topological domain" description="Extracellular" evidence="4">
    <location>
        <begin position="24"/>
        <end position="230"/>
    </location>
</feature>
<feature type="transmembrane region" description="Helical; Name=1" evidence="4">
    <location>
        <begin position="231"/>
        <end position="251"/>
    </location>
</feature>
<feature type="topological domain" description="Cytoplasmic" evidence="4">
    <location>
        <begin position="252"/>
        <end position="267"/>
    </location>
</feature>
<feature type="transmembrane region" description="Helical; Name=2" evidence="4">
    <location>
        <begin position="268"/>
        <end position="288"/>
    </location>
</feature>
<feature type="topological domain" description="Extracellular" evidence="4">
    <location>
        <begin position="289"/>
        <end position="314"/>
    </location>
</feature>
<feature type="transmembrane region" description="Helical; Name=3" evidence="4">
    <location>
        <begin position="315"/>
        <end position="335"/>
    </location>
</feature>
<feature type="topological domain" description="Cytoplasmic" evidence="4">
    <location>
        <begin position="336"/>
        <end position="356"/>
    </location>
</feature>
<feature type="transmembrane region" description="Helical; Name=4" evidence="4">
    <location>
        <begin position="357"/>
        <end position="377"/>
    </location>
</feature>
<feature type="topological domain" description="Extracellular" evidence="4">
    <location>
        <begin position="378"/>
        <end position="401"/>
    </location>
</feature>
<feature type="transmembrane region" description="Helical; Name=5" evidence="4">
    <location>
        <begin position="402"/>
        <end position="422"/>
    </location>
</feature>
<feature type="topological domain" description="Cytoplasmic" evidence="4">
    <location>
        <begin position="423"/>
        <end position="448"/>
    </location>
</feature>
<feature type="transmembrane region" description="Helical; Name=6" evidence="4">
    <location>
        <begin position="449"/>
        <end position="469"/>
    </location>
</feature>
<feature type="topological domain" description="Extracellular" evidence="4">
    <location>
        <begin position="470"/>
        <end position="509"/>
    </location>
</feature>
<feature type="transmembrane region" description="Helical; Name=7" evidence="4">
    <location>
        <begin position="510"/>
        <end position="530"/>
    </location>
</feature>
<feature type="topological domain" description="Cytoplasmic" evidence="4">
    <location>
        <begin position="531"/>
        <end position="592"/>
    </location>
</feature>
<feature type="domain" description="FZ" evidence="5">
    <location>
        <begin position="35"/>
        <end position="156"/>
    </location>
</feature>
<feature type="region of interest" description="Required for Wnt-activated receptor activity" evidence="6">
    <location>
        <begin position="59"/>
        <end position="173"/>
    </location>
</feature>
<feature type="region of interest" description="Required for CTNNB1 accumulation and TCF transcription factor activity" evidence="6">
    <location>
        <begin position="555"/>
        <end position="592"/>
    </location>
</feature>
<feature type="short sequence motif" description="Lys-Thr-X-X-X-Trp motif, mediates interaction with the PDZ domain of Dvl family members" evidence="1">
    <location>
        <begin position="533"/>
        <end position="538"/>
    </location>
</feature>
<feature type="disulfide bond" evidence="5">
    <location>
        <begin position="40"/>
        <end position="101"/>
    </location>
</feature>
<feature type="disulfide bond" evidence="5">
    <location>
        <begin position="48"/>
        <end position="94"/>
    </location>
</feature>
<feature type="disulfide bond" evidence="5">
    <location>
        <begin position="85"/>
        <end position="123"/>
    </location>
</feature>
<feature type="disulfide bond" evidence="5">
    <location>
        <begin position="112"/>
        <end position="153"/>
    </location>
</feature>
<feature type="disulfide bond" evidence="5">
    <location>
        <begin position="116"/>
        <end position="140"/>
    </location>
</feature>
<reference key="1">
    <citation type="journal article" date="2002" name="J. Biol. Chem.">
        <title>Frizzled-9 is activated by Wnt-2 and functions in Wnt/beta -catenin signaling.</title>
        <authorList>
            <person name="Karasawa T."/>
            <person name="Yokokura H."/>
            <person name="Kitajewski J."/>
            <person name="Lombroso P.J."/>
        </authorList>
    </citation>
    <scope>NUCLEOTIDE SEQUENCE [MRNA]</scope>
    <scope>SUBCELLULAR LOCATION</scope>
    <scope>FUNCTION</scope>
    <scope>REGION</scope>
    <source>
        <strain>Sprague-Dawley</strain>
    </source>
</reference>
<reference key="2">
    <citation type="journal article" date="2006" name="J. Immunol.">
        <title>Advanced intercross line mapping of Eae5 reveals Ncf-1 and CLDN4 as candidate genes for experimental autoimmune encephalomyelitis.</title>
        <authorList>
            <person name="Becanovic K."/>
            <person name="Jagodic M."/>
            <person name="Sheng J.R."/>
            <person name="Dahlman I."/>
            <person name="Aboul-Enein F."/>
            <person name="Wallstrom E."/>
            <person name="Olofsson P."/>
            <person name="Holmdahl R."/>
            <person name="Lassmann H."/>
            <person name="Olsson T."/>
        </authorList>
    </citation>
    <scope>NUCLEOTIDE SEQUENCE [MRNA]</scope>
    <source>
        <tissue>Brain</tissue>
    </source>
</reference>
<reference key="3">
    <citation type="journal article" date="2004" name="Nature">
        <title>Genome sequence of the Brown Norway rat yields insights into mammalian evolution.</title>
        <authorList>
            <person name="Gibbs R.A."/>
            <person name="Weinstock G.M."/>
            <person name="Metzker M.L."/>
            <person name="Muzny D.M."/>
            <person name="Sodergren E.J."/>
            <person name="Scherer S."/>
            <person name="Scott G."/>
            <person name="Steffen D."/>
            <person name="Worley K.C."/>
            <person name="Burch P.E."/>
            <person name="Okwuonu G."/>
            <person name="Hines S."/>
            <person name="Lewis L."/>
            <person name="Deramo C."/>
            <person name="Delgado O."/>
            <person name="Dugan-Rocha S."/>
            <person name="Miner G."/>
            <person name="Morgan M."/>
            <person name="Hawes A."/>
            <person name="Gill R."/>
            <person name="Holt R.A."/>
            <person name="Adams M.D."/>
            <person name="Amanatides P.G."/>
            <person name="Baden-Tillson H."/>
            <person name="Barnstead M."/>
            <person name="Chin S."/>
            <person name="Evans C.A."/>
            <person name="Ferriera S."/>
            <person name="Fosler C."/>
            <person name="Glodek A."/>
            <person name="Gu Z."/>
            <person name="Jennings D."/>
            <person name="Kraft C.L."/>
            <person name="Nguyen T."/>
            <person name="Pfannkoch C.M."/>
            <person name="Sitter C."/>
            <person name="Sutton G.G."/>
            <person name="Venter J.C."/>
            <person name="Woodage T."/>
            <person name="Smith D."/>
            <person name="Lee H.-M."/>
            <person name="Gustafson E."/>
            <person name="Cahill P."/>
            <person name="Kana A."/>
            <person name="Doucette-Stamm L."/>
            <person name="Weinstock K."/>
            <person name="Fechtel K."/>
            <person name="Weiss R.B."/>
            <person name="Dunn D.M."/>
            <person name="Green E.D."/>
            <person name="Blakesley R.W."/>
            <person name="Bouffard G.G."/>
            <person name="De Jong P.J."/>
            <person name="Osoegawa K."/>
            <person name="Zhu B."/>
            <person name="Marra M."/>
            <person name="Schein J."/>
            <person name="Bosdet I."/>
            <person name="Fjell C."/>
            <person name="Jones S."/>
            <person name="Krzywinski M."/>
            <person name="Mathewson C."/>
            <person name="Siddiqui A."/>
            <person name="Wye N."/>
            <person name="McPherson J."/>
            <person name="Zhao S."/>
            <person name="Fraser C.M."/>
            <person name="Shetty J."/>
            <person name="Shatsman S."/>
            <person name="Geer K."/>
            <person name="Chen Y."/>
            <person name="Abramzon S."/>
            <person name="Nierman W.C."/>
            <person name="Havlak P.H."/>
            <person name="Chen R."/>
            <person name="Durbin K.J."/>
            <person name="Egan A."/>
            <person name="Ren Y."/>
            <person name="Song X.-Z."/>
            <person name="Li B."/>
            <person name="Liu Y."/>
            <person name="Qin X."/>
            <person name="Cawley S."/>
            <person name="Cooney A.J."/>
            <person name="D'Souza L.M."/>
            <person name="Martin K."/>
            <person name="Wu J.Q."/>
            <person name="Gonzalez-Garay M.L."/>
            <person name="Jackson A.R."/>
            <person name="Kalafus K.J."/>
            <person name="McLeod M.P."/>
            <person name="Milosavljevic A."/>
            <person name="Virk D."/>
            <person name="Volkov A."/>
            <person name="Wheeler D.A."/>
            <person name="Zhang Z."/>
            <person name="Bailey J.A."/>
            <person name="Eichler E.E."/>
            <person name="Tuzun E."/>
            <person name="Birney E."/>
            <person name="Mongin E."/>
            <person name="Ureta-Vidal A."/>
            <person name="Woodwark C."/>
            <person name="Zdobnov E."/>
            <person name="Bork P."/>
            <person name="Suyama M."/>
            <person name="Torrents D."/>
            <person name="Alexandersson M."/>
            <person name="Trask B.J."/>
            <person name="Young J.M."/>
            <person name="Huang H."/>
            <person name="Wang H."/>
            <person name="Xing H."/>
            <person name="Daniels S."/>
            <person name="Gietzen D."/>
            <person name="Schmidt J."/>
            <person name="Stevens K."/>
            <person name="Vitt U."/>
            <person name="Wingrove J."/>
            <person name="Camara F."/>
            <person name="Mar Alba M."/>
            <person name="Abril J.F."/>
            <person name="Guigo R."/>
            <person name="Smit A."/>
            <person name="Dubchak I."/>
            <person name="Rubin E.M."/>
            <person name="Couronne O."/>
            <person name="Poliakov A."/>
            <person name="Huebner N."/>
            <person name="Ganten D."/>
            <person name="Goesele C."/>
            <person name="Hummel O."/>
            <person name="Kreitler T."/>
            <person name="Lee Y.-A."/>
            <person name="Monti J."/>
            <person name="Schulz H."/>
            <person name="Zimdahl H."/>
            <person name="Himmelbauer H."/>
            <person name="Lehrach H."/>
            <person name="Jacob H.J."/>
            <person name="Bromberg S."/>
            <person name="Gullings-Handley J."/>
            <person name="Jensen-Seaman M.I."/>
            <person name="Kwitek A.E."/>
            <person name="Lazar J."/>
            <person name="Pasko D."/>
            <person name="Tonellato P.J."/>
            <person name="Twigger S."/>
            <person name="Ponting C.P."/>
            <person name="Duarte J.M."/>
            <person name="Rice S."/>
            <person name="Goodstadt L."/>
            <person name="Beatson S.A."/>
            <person name="Emes R.D."/>
            <person name="Winter E.E."/>
            <person name="Webber C."/>
            <person name="Brandt P."/>
            <person name="Nyakatura G."/>
            <person name="Adetobi M."/>
            <person name="Chiaromonte F."/>
            <person name="Elnitski L."/>
            <person name="Eswara P."/>
            <person name="Hardison R.C."/>
            <person name="Hou M."/>
            <person name="Kolbe D."/>
            <person name="Makova K."/>
            <person name="Miller W."/>
            <person name="Nekrutenko A."/>
            <person name="Riemer C."/>
            <person name="Schwartz S."/>
            <person name="Taylor J."/>
            <person name="Yang S."/>
            <person name="Zhang Y."/>
            <person name="Lindpaintner K."/>
            <person name="Andrews T.D."/>
            <person name="Caccamo M."/>
            <person name="Clamp M."/>
            <person name="Clarke L."/>
            <person name="Curwen V."/>
            <person name="Durbin R.M."/>
            <person name="Eyras E."/>
            <person name="Searle S.M."/>
            <person name="Cooper G.M."/>
            <person name="Batzoglou S."/>
            <person name="Brudno M."/>
            <person name="Sidow A."/>
            <person name="Stone E.A."/>
            <person name="Payseur B.A."/>
            <person name="Bourque G."/>
            <person name="Lopez-Otin C."/>
            <person name="Puente X.S."/>
            <person name="Chakrabarti K."/>
            <person name="Chatterji S."/>
            <person name="Dewey C."/>
            <person name="Pachter L."/>
            <person name="Bray N."/>
            <person name="Yap V.B."/>
            <person name="Caspi A."/>
            <person name="Tesler G."/>
            <person name="Pevzner P.A."/>
            <person name="Haussler D."/>
            <person name="Roskin K.M."/>
            <person name="Baertsch R."/>
            <person name="Clawson H."/>
            <person name="Furey T.S."/>
            <person name="Hinrichs A.S."/>
            <person name="Karolchik D."/>
            <person name="Kent W.J."/>
            <person name="Rosenbloom K.R."/>
            <person name="Trumbower H."/>
            <person name="Weirauch M."/>
            <person name="Cooper D.N."/>
            <person name="Stenson P.D."/>
            <person name="Ma B."/>
            <person name="Brent M."/>
            <person name="Arumugam M."/>
            <person name="Shteynberg D."/>
            <person name="Copley R.R."/>
            <person name="Taylor M.S."/>
            <person name="Riethman H."/>
            <person name="Mudunuri U."/>
            <person name="Peterson J."/>
            <person name="Guyer M."/>
            <person name="Felsenfeld A."/>
            <person name="Old S."/>
            <person name="Mockrin S."/>
            <person name="Collins F.S."/>
        </authorList>
    </citation>
    <scope>NUCLEOTIDE SEQUENCE [LARGE SCALE GENOMIC DNA]</scope>
    <source>
        <strain>Brown Norway</strain>
    </source>
</reference>
<reference key="4">
    <citation type="submission" date="2005-07" db="EMBL/GenBank/DDBJ databases">
        <authorList>
            <person name="Mural R.J."/>
            <person name="Adams M.D."/>
            <person name="Myers E.W."/>
            <person name="Smith H.O."/>
            <person name="Venter J.C."/>
        </authorList>
    </citation>
    <scope>NUCLEOTIDE SEQUENCE [LARGE SCALE GENOMIC DNA]</scope>
</reference>
<protein>
    <recommendedName>
        <fullName evidence="7">Frizzled-9</fullName>
    </recommendedName>
    <alternativeName>
        <fullName evidence="8">Frizzled-like protein 9</fullName>
        <shortName evidence="7">rFz9</shortName>
    </alternativeName>
</protein>
<organism>
    <name type="scientific">Rattus norvegicus</name>
    <name type="common">Rat</name>
    <dbReference type="NCBI Taxonomy" id="10116"/>
    <lineage>
        <taxon>Eukaryota</taxon>
        <taxon>Metazoa</taxon>
        <taxon>Chordata</taxon>
        <taxon>Craniata</taxon>
        <taxon>Vertebrata</taxon>
        <taxon>Euteleostomi</taxon>
        <taxon>Mammalia</taxon>
        <taxon>Eutheria</taxon>
        <taxon>Euarchontoglires</taxon>
        <taxon>Glires</taxon>
        <taxon>Rodentia</taxon>
        <taxon>Myomorpha</taxon>
        <taxon>Muroidea</taxon>
        <taxon>Muridae</taxon>
        <taxon>Murinae</taxon>
        <taxon>Rattus</taxon>
    </lineage>
</organism>
<name>FZD9_RAT</name>
<proteinExistence type="evidence at transcript level"/>